<protein>
    <recommendedName>
        <fullName evidence="1">4-diphosphocytidyl-2-C-methyl-D-erythritol kinase</fullName>
        <shortName evidence="1">CMK</shortName>
        <ecNumber evidence="1">2.7.1.148</ecNumber>
    </recommendedName>
    <alternativeName>
        <fullName evidence="1">4-(cytidine-5'-diphospho)-2-C-methyl-D-erythritol kinase</fullName>
    </alternativeName>
</protein>
<evidence type="ECO:0000255" key="1">
    <source>
        <dbReference type="HAMAP-Rule" id="MF_00061"/>
    </source>
</evidence>
<name>ISPE_SHEON</name>
<proteinExistence type="inferred from homology"/>
<organism>
    <name type="scientific">Shewanella oneidensis (strain ATCC 700550 / JCM 31522 / CIP 106686 / LMG 19005 / NCIMB 14063 / MR-1)</name>
    <dbReference type="NCBI Taxonomy" id="211586"/>
    <lineage>
        <taxon>Bacteria</taxon>
        <taxon>Pseudomonadati</taxon>
        <taxon>Pseudomonadota</taxon>
        <taxon>Gammaproteobacteria</taxon>
        <taxon>Alteromonadales</taxon>
        <taxon>Shewanellaceae</taxon>
        <taxon>Shewanella</taxon>
    </lineage>
</organism>
<sequence length="284" mass="30721">MSQEISRNWPAPAKLNLFLHINGRRSDGYHELQTLFQFVDCCDQLDFRVTDTPELILHSTMSAVVADSDNLILRAAKSLQQATGFNGGAEIWLDKRLPMGGGLGGGSSDAATTLVALNRLWNTQLSHDELAAIGLKLGADIPVFIHGFAAFAQGVGERLQAVNPAELWYLVIAPDAHVSTAAVFQDPLLPRNTPKLGLDTLLSQPWANDCQELVVSKYPQVAKALGWLLEYAPSRMTGTGACVFGEFSSQQQALAALAKLPSDMQGFVAKGMNISPLIVRLNRP</sequence>
<feature type="chain" id="PRO_0000189259" description="4-diphosphocytidyl-2-C-methyl-D-erythritol kinase">
    <location>
        <begin position="1"/>
        <end position="284"/>
    </location>
</feature>
<feature type="active site" evidence="1">
    <location>
        <position position="14"/>
    </location>
</feature>
<feature type="active site" evidence="1">
    <location>
        <position position="140"/>
    </location>
</feature>
<feature type="binding site" evidence="1">
    <location>
        <begin position="98"/>
        <end position="108"/>
    </location>
    <ligand>
        <name>ATP</name>
        <dbReference type="ChEBI" id="CHEBI:30616"/>
    </ligand>
</feature>
<comment type="function">
    <text evidence="1">Catalyzes the phosphorylation of the position 2 hydroxy group of 4-diphosphocytidyl-2C-methyl-D-erythritol.</text>
</comment>
<comment type="catalytic activity">
    <reaction evidence="1">
        <text>4-CDP-2-C-methyl-D-erythritol + ATP = 4-CDP-2-C-methyl-D-erythritol 2-phosphate + ADP + H(+)</text>
        <dbReference type="Rhea" id="RHEA:18437"/>
        <dbReference type="ChEBI" id="CHEBI:15378"/>
        <dbReference type="ChEBI" id="CHEBI:30616"/>
        <dbReference type="ChEBI" id="CHEBI:57823"/>
        <dbReference type="ChEBI" id="CHEBI:57919"/>
        <dbReference type="ChEBI" id="CHEBI:456216"/>
        <dbReference type="EC" id="2.7.1.148"/>
    </reaction>
</comment>
<comment type="pathway">
    <text evidence="1">Isoprenoid biosynthesis; isopentenyl diphosphate biosynthesis via DXP pathway; isopentenyl diphosphate from 1-deoxy-D-xylulose 5-phosphate: step 3/6.</text>
</comment>
<comment type="similarity">
    <text evidence="1">Belongs to the GHMP kinase family. IspE subfamily.</text>
</comment>
<keyword id="KW-0067">ATP-binding</keyword>
<keyword id="KW-0414">Isoprene biosynthesis</keyword>
<keyword id="KW-0418">Kinase</keyword>
<keyword id="KW-0547">Nucleotide-binding</keyword>
<keyword id="KW-1185">Reference proteome</keyword>
<keyword id="KW-0808">Transferase</keyword>
<gene>
    <name evidence="1" type="primary">ispE</name>
    <name type="ordered locus">SO_3836</name>
</gene>
<reference key="1">
    <citation type="journal article" date="2002" name="Nat. Biotechnol.">
        <title>Genome sequence of the dissimilatory metal ion-reducing bacterium Shewanella oneidensis.</title>
        <authorList>
            <person name="Heidelberg J.F."/>
            <person name="Paulsen I.T."/>
            <person name="Nelson K.E."/>
            <person name="Gaidos E.J."/>
            <person name="Nelson W.C."/>
            <person name="Read T.D."/>
            <person name="Eisen J.A."/>
            <person name="Seshadri R."/>
            <person name="Ward N.L."/>
            <person name="Methe B.A."/>
            <person name="Clayton R.A."/>
            <person name="Meyer T."/>
            <person name="Tsapin A."/>
            <person name="Scott J."/>
            <person name="Beanan M.J."/>
            <person name="Brinkac L.M."/>
            <person name="Daugherty S.C."/>
            <person name="DeBoy R.T."/>
            <person name="Dodson R.J."/>
            <person name="Durkin A.S."/>
            <person name="Haft D.H."/>
            <person name="Kolonay J.F."/>
            <person name="Madupu R."/>
            <person name="Peterson J.D."/>
            <person name="Umayam L.A."/>
            <person name="White O."/>
            <person name="Wolf A.M."/>
            <person name="Vamathevan J.J."/>
            <person name="Weidman J.F."/>
            <person name="Impraim M."/>
            <person name="Lee K."/>
            <person name="Berry K.J."/>
            <person name="Lee C."/>
            <person name="Mueller J."/>
            <person name="Khouri H.M."/>
            <person name="Gill J."/>
            <person name="Utterback T.R."/>
            <person name="McDonald L.A."/>
            <person name="Feldblyum T.V."/>
            <person name="Smith H.O."/>
            <person name="Venter J.C."/>
            <person name="Nealson K.H."/>
            <person name="Fraser C.M."/>
        </authorList>
    </citation>
    <scope>NUCLEOTIDE SEQUENCE [LARGE SCALE GENOMIC DNA]</scope>
    <source>
        <strain>ATCC 700550 / JCM 31522 / CIP 106686 / LMG 19005 / NCIMB 14063 / MR-1</strain>
    </source>
</reference>
<dbReference type="EC" id="2.7.1.148" evidence="1"/>
<dbReference type="EMBL" id="AE014299">
    <property type="protein sequence ID" value="AAN56813.1"/>
    <property type="molecule type" value="Genomic_DNA"/>
</dbReference>
<dbReference type="RefSeq" id="NP_719369.1">
    <property type="nucleotide sequence ID" value="NC_004347.2"/>
</dbReference>
<dbReference type="RefSeq" id="WP_011073600.1">
    <property type="nucleotide sequence ID" value="NC_004347.2"/>
</dbReference>
<dbReference type="SMR" id="Q8EAR0"/>
<dbReference type="STRING" id="211586.SO_3836"/>
<dbReference type="PaxDb" id="211586-SO_3836"/>
<dbReference type="KEGG" id="son:SO_3836"/>
<dbReference type="PATRIC" id="fig|211586.12.peg.3724"/>
<dbReference type="eggNOG" id="COG1947">
    <property type="taxonomic scope" value="Bacteria"/>
</dbReference>
<dbReference type="HOGENOM" id="CLU_053057_3_0_6"/>
<dbReference type="OrthoDB" id="9809438at2"/>
<dbReference type="PhylomeDB" id="Q8EAR0"/>
<dbReference type="BioCyc" id="SONE211586:G1GMP-3561-MONOMER"/>
<dbReference type="UniPathway" id="UPA00056">
    <property type="reaction ID" value="UER00094"/>
</dbReference>
<dbReference type="Proteomes" id="UP000008186">
    <property type="component" value="Chromosome"/>
</dbReference>
<dbReference type="GO" id="GO:0050515">
    <property type="term" value="F:4-(cytidine 5'-diphospho)-2-C-methyl-D-erythritol kinase activity"/>
    <property type="evidence" value="ECO:0000318"/>
    <property type="project" value="GO_Central"/>
</dbReference>
<dbReference type="GO" id="GO:0005524">
    <property type="term" value="F:ATP binding"/>
    <property type="evidence" value="ECO:0007669"/>
    <property type="project" value="UniProtKB-UniRule"/>
</dbReference>
<dbReference type="GO" id="GO:0019288">
    <property type="term" value="P:isopentenyl diphosphate biosynthetic process, methylerythritol 4-phosphate pathway"/>
    <property type="evidence" value="ECO:0007669"/>
    <property type="project" value="UniProtKB-UniRule"/>
</dbReference>
<dbReference type="GO" id="GO:0016114">
    <property type="term" value="P:terpenoid biosynthetic process"/>
    <property type="evidence" value="ECO:0007669"/>
    <property type="project" value="InterPro"/>
</dbReference>
<dbReference type="FunFam" id="3.30.230.10:FF:000022">
    <property type="entry name" value="4-diphosphocytidyl-2-C-methyl-D-erythritol kinase"/>
    <property type="match status" value="1"/>
</dbReference>
<dbReference type="Gene3D" id="3.30.230.10">
    <property type="match status" value="1"/>
</dbReference>
<dbReference type="Gene3D" id="3.30.70.890">
    <property type="entry name" value="GHMP kinase, C-terminal domain"/>
    <property type="match status" value="1"/>
</dbReference>
<dbReference type="HAMAP" id="MF_00061">
    <property type="entry name" value="IspE"/>
    <property type="match status" value="1"/>
</dbReference>
<dbReference type="InterPro" id="IPR013750">
    <property type="entry name" value="GHMP_kinase_C_dom"/>
</dbReference>
<dbReference type="InterPro" id="IPR036554">
    <property type="entry name" value="GHMP_kinase_C_sf"/>
</dbReference>
<dbReference type="InterPro" id="IPR006204">
    <property type="entry name" value="GHMP_kinase_N_dom"/>
</dbReference>
<dbReference type="InterPro" id="IPR004424">
    <property type="entry name" value="IspE"/>
</dbReference>
<dbReference type="InterPro" id="IPR020568">
    <property type="entry name" value="Ribosomal_Su5_D2-typ_SF"/>
</dbReference>
<dbReference type="InterPro" id="IPR014721">
    <property type="entry name" value="Ribsml_uS5_D2-typ_fold_subgr"/>
</dbReference>
<dbReference type="NCBIfam" id="TIGR00154">
    <property type="entry name" value="ispE"/>
    <property type="match status" value="1"/>
</dbReference>
<dbReference type="PANTHER" id="PTHR43527">
    <property type="entry name" value="4-DIPHOSPHOCYTIDYL-2-C-METHYL-D-ERYTHRITOL KINASE, CHLOROPLASTIC"/>
    <property type="match status" value="1"/>
</dbReference>
<dbReference type="PANTHER" id="PTHR43527:SF2">
    <property type="entry name" value="4-DIPHOSPHOCYTIDYL-2-C-METHYL-D-ERYTHRITOL KINASE, CHLOROPLASTIC"/>
    <property type="match status" value="1"/>
</dbReference>
<dbReference type="Pfam" id="PF08544">
    <property type="entry name" value="GHMP_kinases_C"/>
    <property type="match status" value="1"/>
</dbReference>
<dbReference type="Pfam" id="PF00288">
    <property type="entry name" value="GHMP_kinases_N"/>
    <property type="match status" value="1"/>
</dbReference>
<dbReference type="PIRSF" id="PIRSF010376">
    <property type="entry name" value="IspE"/>
    <property type="match status" value="1"/>
</dbReference>
<dbReference type="SUPFAM" id="SSF55060">
    <property type="entry name" value="GHMP Kinase, C-terminal domain"/>
    <property type="match status" value="1"/>
</dbReference>
<dbReference type="SUPFAM" id="SSF54211">
    <property type="entry name" value="Ribosomal protein S5 domain 2-like"/>
    <property type="match status" value="1"/>
</dbReference>
<accession>Q8EAR0</accession>